<proteinExistence type="evidence at protein level"/>
<name>GALA_ONCMY</name>
<feature type="peptide" id="PRO_0000043876" description="Galanin">
    <location>
        <begin position="1"/>
        <end position="29"/>
    </location>
</feature>
<feature type="modified residue" description="Alanine amide" evidence="1">
    <location>
        <position position="29"/>
    </location>
</feature>
<sequence length="29" mass="3044">GWTLNSAGYLLGPHGIDGHRTLSDKHGLA</sequence>
<comment type="function">
    <text>Contracts smooth muscle of the gastrointestinal and genitourinary tract, regulates growth hormone release, modulates insulin release, and may be involved in the control of adrenal secretion.</text>
</comment>
<comment type="subcellular location">
    <subcellularLocation>
        <location>Secreted</location>
    </subcellularLocation>
</comment>
<comment type="similarity">
    <text evidence="2">Belongs to the galanin family.</text>
</comment>
<dbReference type="Proteomes" id="UP000694395">
    <property type="component" value="Unplaced"/>
</dbReference>
<dbReference type="GO" id="GO:0005615">
    <property type="term" value="C:extracellular space"/>
    <property type="evidence" value="ECO:0007669"/>
    <property type="project" value="TreeGrafter"/>
</dbReference>
<dbReference type="GO" id="GO:0030141">
    <property type="term" value="C:secretory granule"/>
    <property type="evidence" value="ECO:0007669"/>
    <property type="project" value="TreeGrafter"/>
</dbReference>
<dbReference type="GO" id="GO:0031763">
    <property type="term" value="F:galanin receptor binding"/>
    <property type="evidence" value="ECO:0007669"/>
    <property type="project" value="TreeGrafter"/>
</dbReference>
<dbReference type="GO" id="GO:0005184">
    <property type="term" value="F:neuropeptide hormone activity"/>
    <property type="evidence" value="ECO:0007669"/>
    <property type="project" value="TreeGrafter"/>
</dbReference>
<dbReference type="GO" id="GO:0007218">
    <property type="term" value="P:neuropeptide signaling pathway"/>
    <property type="evidence" value="ECO:0007669"/>
    <property type="project" value="UniProtKB-KW"/>
</dbReference>
<dbReference type="InterPro" id="IPR008174">
    <property type="entry name" value="Galanin"/>
</dbReference>
<dbReference type="InterPro" id="IPR008175">
    <property type="entry name" value="Galanin_pre"/>
</dbReference>
<dbReference type="PANTHER" id="PTHR16839">
    <property type="entry name" value="GALANIN"/>
    <property type="match status" value="1"/>
</dbReference>
<dbReference type="PANTHER" id="PTHR16839:SF1">
    <property type="entry name" value="GALANIN PEPTIDES"/>
    <property type="match status" value="1"/>
</dbReference>
<dbReference type="Pfam" id="PF01296">
    <property type="entry name" value="Galanin"/>
    <property type="match status" value="1"/>
</dbReference>
<dbReference type="PRINTS" id="PR00273">
    <property type="entry name" value="GALANIN"/>
</dbReference>
<dbReference type="PROSITE" id="PS00861">
    <property type="entry name" value="GALANIN"/>
    <property type="match status" value="1"/>
</dbReference>
<gene>
    <name type="primary">gal</name>
</gene>
<protein>
    <recommendedName>
        <fullName>Galanin</fullName>
    </recommendedName>
</protein>
<accession>P47213</accession>
<organism>
    <name type="scientific">Oncorhynchus mykiss</name>
    <name type="common">Rainbow trout</name>
    <name type="synonym">Salmo gairdneri</name>
    <dbReference type="NCBI Taxonomy" id="8022"/>
    <lineage>
        <taxon>Eukaryota</taxon>
        <taxon>Metazoa</taxon>
        <taxon>Chordata</taxon>
        <taxon>Craniata</taxon>
        <taxon>Vertebrata</taxon>
        <taxon>Euteleostomi</taxon>
        <taxon>Actinopterygii</taxon>
        <taxon>Neopterygii</taxon>
        <taxon>Teleostei</taxon>
        <taxon>Protacanthopterygii</taxon>
        <taxon>Salmoniformes</taxon>
        <taxon>Salmonidae</taxon>
        <taxon>Salmoninae</taxon>
        <taxon>Oncorhynchus</taxon>
    </lineage>
</organism>
<reference key="1">
    <citation type="journal article" date="1994" name="J. Comp. Neurol.">
        <title>Characterization of trout galanin and its distribution in trout brain and pituitary.</title>
        <authorList>
            <person name="Anglade I."/>
            <person name="Wang Y."/>
            <person name="Jensen J."/>
            <person name="Tramu G."/>
            <person name="Kah O."/>
            <person name="Conlon J.M."/>
        </authorList>
    </citation>
    <scope>PROTEIN SEQUENCE</scope>
    <scope>AMIDATION AT ALA-29</scope>
    <source>
        <tissue>Stomach</tissue>
    </source>
</reference>
<evidence type="ECO:0000269" key="1">
    <source>
    </source>
</evidence>
<evidence type="ECO:0000305" key="2"/>
<keyword id="KW-0027">Amidation</keyword>
<keyword id="KW-0903">Direct protein sequencing</keyword>
<keyword id="KW-0372">Hormone</keyword>
<keyword id="KW-0527">Neuropeptide</keyword>
<keyword id="KW-0964">Secreted</keyword>